<sequence length="96" mass="11469">MHMFYYSIYDRKARSYGDLISFPSGEKEAAIRWFRDVVMDSDSKNILHRYPEDFDFCYIGYFDKDKGRFYPVDAGIVTIINAGEFFLDSEYRQEEV</sequence>
<accession>P19183</accession>
<accession>P19190</accession>
<protein>
    <recommendedName>
        <fullName>Protein ORF5</fullName>
    </recommendedName>
</protein>
<reference key="1">
    <citation type="journal article" date="1989" name="J. Gen. Virol.">
        <title>Analysis of the complete nucleotide sequence of Chp1, a phage which infects avian Chlamydia psittaci.</title>
        <authorList>
            <person name="Storey C.C."/>
            <person name="Lusher M."/>
            <person name="Richmond S.J."/>
        </authorList>
    </citation>
    <scope>NUCLEOTIDE SEQUENCE [GENOMIC DNA]</scope>
</reference>
<dbReference type="EMBL" id="D00624">
    <property type="protein sequence ID" value="BAA00513.1"/>
    <property type="molecule type" value="Genomic_DNA"/>
</dbReference>
<dbReference type="EMBL" id="D00624">
    <property type="protein sequence ID" value="BAA00514.1"/>
    <property type="status" value="ALT_INIT"/>
    <property type="molecule type" value="Genomic_DNA"/>
</dbReference>
<dbReference type="KEGG" id="vg:1261208"/>
<dbReference type="KEGG" id="vg:1261209"/>
<dbReference type="Proteomes" id="UP000002125">
    <property type="component" value="Genome"/>
</dbReference>
<dbReference type="InterPro" id="IPR046781">
    <property type="entry name" value="Phage_ORF5"/>
</dbReference>
<dbReference type="Pfam" id="PF20577">
    <property type="entry name" value="Phage_ORF5"/>
    <property type="match status" value="1"/>
</dbReference>
<organism>
    <name type="scientific">Chlamydia phage 1</name>
    <name type="common">Bacteriophage Chp1</name>
    <dbReference type="NCBI Taxonomy" id="2003327"/>
    <lineage>
        <taxon>Viruses</taxon>
        <taxon>Monodnaviria</taxon>
        <taxon>Sangervirae</taxon>
        <taxon>Phixviricota</taxon>
        <taxon>Malgrandaviricetes</taxon>
        <taxon>Petitvirales</taxon>
        <taxon>Microviridae</taxon>
        <taxon>Gokushovirinae</taxon>
        <taxon>Chlamydiamicrovirus</taxon>
    </lineage>
</organism>
<gene>
    <name type="ORF">ORF5</name>
</gene>
<organismHost>
    <name type="scientific">Chlamydia psittaci</name>
    <name type="common">Chlamydophila psittaci</name>
    <dbReference type="NCBI Taxonomy" id="83554"/>
</organismHost>
<comment type="function">
    <text evidence="1">Plays a central role in the packaging of viral DNA into phage procapsid, which occurs in the late stage of infection. Can interact with the replicative complex after the completion of one round of DNA synthesis. When protein ORF5 is bound to the replicative form, the complex becomes accessible to procapsid and serves as a DNA packaging apparatus (By similarity).</text>
</comment>
<comment type="similarity">
    <text evidence="2">Belongs to the microviridae C protein family.</text>
</comment>
<comment type="sequence caution" evidence="2">
    <conflict type="erroneous initiation">
        <sequence resource="EMBL-CDS" id="BAA00514"/>
    </conflict>
</comment>
<keyword id="KW-1185">Reference proteome</keyword>
<name>C_BPCHP</name>
<proteinExistence type="inferred from homology"/>
<evidence type="ECO:0000250" key="1"/>
<evidence type="ECO:0000305" key="2"/>
<feature type="chain" id="PRO_0000066062" description="Protein ORF5">
    <location>
        <begin position="1"/>
        <end position="96"/>
    </location>
</feature>